<organism>
    <name type="scientific">Macaca fascicularis</name>
    <name type="common">Crab-eating macaque</name>
    <name type="synonym">Cynomolgus monkey</name>
    <dbReference type="NCBI Taxonomy" id="9541"/>
    <lineage>
        <taxon>Eukaryota</taxon>
        <taxon>Metazoa</taxon>
        <taxon>Chordata</taxon>
        <taxon>Craniata</taxon>
        <taxon>Vertebrata</taxon>
        <taxon>Euteleostomi</taxon>
        <taxon>Mammalia</taxon>
        <taxon>Eutheria</taxon>
        <taxon>Euarchontoglires</taxon>
        <taxon>Primates</taxon>
        <taxon>Haplorrhini</taxon>
        <taxon>Catarrhini</taxon>
        <taxon>Cercopithecidae</taxon>
        <taxon>Cercopithecinae</taxon>
        <taxon>Macaca</taxon>
    </lineage>
</organism>
<reference key="1">
    <citation type="submission" date="2005-06" db="EMBL/GenBank/DDBJ databases">
        <title>DNA sequences of macaque genes expressed in brain or testis and its evolutionary implications.</title>
        <authorList>
            <consortium name="International consortium for macaque cDNA sequencing and analysis"/>
        </authorList>
    </citation>
    <scope>NUCLEOTIDE SEQUENCE [LARGE SCALE MRNA]</scope>
    <source>
        <tissue>Testis</tissue>
    </source>
</reference>
<feature type="chain" id="PRO_0000239430" description="Translation initiation factor eIF2B subunit gamma">
    <location>
        <begin position="1"/>
        <end position="452"/>
    </location>
</feature>
<feature type="modified residue" description="N-acetylmethionine" evidence="2">
    <location>
        <position position="1"/>
    </location>
</feature>
<feature type="modified residue" description="Phosphoserine" evidence="2">
    <location>
        <position position="260"/>
    </location>
</feature>
<keyword id="KW-0007">Acetylation</keyword>
<keyword id="KW-0963">Cytoplasm</keyword>
<keyword id="KW-0396">Initiation factor</keyword>
<keyword id="KW-0597">Phosphoprotein</keyword>
<keyword id="KW-0648">Protein biosynthesis</keyword>
<keyword id="KW-1185">Reference proteome</keyword>
<comment type="function">
    <text evidence="2">Acts as a component of the translation initiation factor 2B (eIF2B) complex, which catalyzes the exchange of GDP for GTP on the eukaryotic initiation factor 2 (eIF2) complex gamma subunit. Its guanine nucleotide exchange factor activity is repressed when bound to eIF2 complex phosphorylated on the alpha subunit, thereby limiting the amount of methionyl-initiator methionine tRNA available to the ribosome and consequently global translation is repressed.</text>
</comment>
<comment type="activity regulation">
    <text evidence="2">Activated by the chemical integrated stress response (ISR) inhibitor ISRIB which stimulates guanine nucleotide exchange factor activity for both phosphorylated and unphosphorylated eIF2.</text>
</comment>
<comment type="subunit">
    <text evidence="2">Component of the translation initiation factor 2B (eIF2B) complex which is a heterodecamer of two sets of five different subunits: alpha, beta, gamma, delta and epsilon. Subunits alpha, beta and delta comprise a regulatory subcomplex and subunits epsilon and gamma comprise a catalytic subcomplex. Within the complex, the hexameric regulatory complex resides at the center, with the two heterodimeric catalytic subcomplexes bound on opposite sides.</text>
</comment>
<comment type="subcellular location">
    <subcellularLocation>
        <location evidence="1">Cytoplasm</location>
        <location evidence="1">Cytosol</location>
    </subcellularLocation>
</comment>
<comment type="similarity">
    <text evidence="3">Belongs to the eIF-2B gamma/epsilon subunits family.</text>
</comment>
<dbReference type="EMBL" id="AB169097">
    <property type="protein sequence ID" value="BAE01191.1"/>
    <property type="molecule type" value="mRNA"/>
</dbReference>
<dbReference type="SMR" id="Q4R6T3"/>
<dbReference type="STRING" id="9541.ENSMFAP00000001207"/>
<dbReference type="eggNOG" id="KOG1462">
    <property type="taxonomic scope" value="Eukaryota"/>
</dbReference>
<dbReference type="Proteomes" id="UP000233100">
    <property type="component" value="Unplaced"/>
</dbReference>
<dbReference type="GO" id="GO:0005737">
    <property type="term" value="C:cytoplasm"/>
    <property type="evidence" value="ECO:0000250"/>
    <property type="project" value="UniProtKB"/>
</dbReference>
<dbReference type="GO" id="GO:0005829">
    <property type="term" value="C:cytosol"/>
    <property type="evidence" value="ECO:0007669"/>
    <property type="project" value="UniProtKB-SubCell"/>
</dbReference>
<dbReference type="GO" id="GO:0005851">
    <property type="term" value="C:eukaryotic translation initiation factor 2B complex"/>
    <property type="evidence" value="ECO:0000250"/>
    <property type="project" value="UniProtKB"/>
</dbReference>
<dbReference type="GO" id="GO:0032045">
    <property type="term" value="C:guanyl-nucleotide exchange factor complex"/>
    <property type="evidence" value="ECO:0007669"/>
    <property type="project" value="TreeGrafter"/>
</dbReference>
<dbReference type="GO" id="GO:0005085">
    <property type="term" value="F:guanyl-nucleotide exchange factor activity"/>
    <property type="evidence" value="ECO:0000250"/>
    <property type="project" value="UniProtKB"/>
</dbReference>
<dbReference type="GO" id="GO:0003743">
    <property type="term" value="F:translation initiation factor activity"/>
    <property type="evidence" value="ECO:0007669"/>
    <property type="project" value="UniProtKB-KW"/>
</dbReference>
<dbReference type="GO" id="GO:0002183">
    <property type="term" value="P:cytoplasmic translational initiation"/>
    <property type="evidence" value="ECO:0000250"/>
    <property type="project" value="UniProtKB"/>
</dbReference>
<dbReference type="GO" id="GO:0014003">
    <property type="term" value="P:oligodendrocyte development"/>
    <property type="evidence" value="ECO:0000250"/>
    <property type="project" value="UniProtKB"/>
</dbReference>
<dbReference type="GO" id="GO:0050852">
    <property type="term" value="P:T cell receptor signaling pathway"/>
    <property type="evidence" value="ECO:0000250"/>
    <property type="project" value="UniProtKB"/>
</dbReference>
<dbReference type="GO" id="GO:0006413">
    <property type="term" value="P:translational initiation"/>
    <property type="evidence" value="ECO:0000250"/>
    <property type="project" value="UniProtKB"/>
</dbReference>
<dbReference type="CDD" id="cd04198">
    <property type="entry name" value="eIF-2B_gamma_N"/>
    <property type="match status" value="1"/>
</dbReference>
<dbReference type="CDD" id="cd04652">
    <property type="entry name" value="LbH_eIF2B_gamma_C"/>
    <property type="match status" value="1"/>
</dbReference>
<dbReference type="FunFam" id="2.160.10.10:FF:000031">
    <property type="entry name" value="Translation initiation factor eIF-2B subunit gamma"/>
    <property type="match status" value="1"/>
</dbReference>
<dbReference type="FunFam" id="3.90.550.10:FF:000105">
    <property type="entry name" value="translation initiation factor eIF-2B subunit gamma"/>
    <property type="match status" value="1"/>
</dbReference>
<dbReference type="Gene3D" id="2.160.10.10">
    <property type="entry name" value="Hexapeptide repeat proteins"/>
    <property type="match status" value="1"/>
</dbReference>
<dbReference type="Gene3D" id="3.90.550.10">
    <property type="entry name" value="Spore Coat Polysaccharide Biosynthesis Protein SpsA, Chain A"/>
    <property type="match status" value="1"/>
</dbReference>
<dbReference type="InterPro" id="IPR051960">
    <property type="entry name" value="eIF2B_gamma"/>
</dbReference>
<dbReference type="InterPro" id="IPR005835">
    <property type="entry name" value="NTP_transferase_dom"/>
</dbReference>
<dbReference type="InterPro" id="IPR029044">
    <property type="entry name" value="Nucleotide-diphossugar_trans"/>
</dbReference>
<dbReference type="PANTHER" id="PTHR45989">
    <property type="entry name" value="TRANSLATION INITIATION FACTOR EIF-2B SUBUNIT GAMMA"/>
    <property type="match status" value="1"/>
</dbReference>
<dbReference type="PANTHER" id="PTHR45989:SF1">
    <property type="entry name" value="TRANSLATION INITIATION FACTOR EIF-2B SUBUNIT GAMMA"/>
    <property type="match status" value="1"/>
</dbReference>
<dbReference type="Pfam" id="PF25084">
    <property type="entry name" value="LbH_EIF2B"/>
    <property type="match status" value="1"/>
</dbReference>
<dbReference type="Pfam" id="PF00483">
    <property type="entry name" value="NTP_transferase"/>
    <property type="match status" value="1"/>
</dbReference>
<dbReference type="SUPFAM" id="SSF53448">
    <property type="entry name" value="Nucleotide-diphospho-sugar transferases"/>
    <property type="match status" value="1"/>
</dbReference>
<accession>Q4R6T3</accession>
<name>EI2BG_MACFA</name>
<evidence type="ECO:0000250" key="1">
    <source>
        <dbReference type="UniProtKB" id="P56288"/>
    </source>
</evidence>
<evidence type="ECO:0000250" key="2">
    <source>
        <dbReference type="UniProtKB" id="Q9NR50"/>
    </source>
</evidence>
<evidence type="ECO:0000305" key="3"/>
<gene>
    <name type="primary">EIF2B3</name>
    <name type="ORF">QtsA-17166</name>
</gene>
<protein>
    <recommendedName>
        <fullName>Translation initiation factor eIF2B subunit gamma</fullName>
    </recommendedName>
    <alternativeName>
        <fullName>eIF2B GDP-GTP exchange factor subunit gamma</fullName>
    </alternativeName>
</protein>
<sequence length="452" mass="50299">MEFQAVVMAVGGGSRMTDLTSSIPKPLLPAGNKPLIWYPLNLLERVGFEEVIVVTTRDVQKALCAEFKMKMKPDIVCIPDDADMGTADSLRYMYPKLKTDVLVLSCDLITDVALHEVVDLFRAYDASLAMLMRKGQDSLEPVPGQKGKKKAVEQRDFIGVDSTGKRLLFMANEADLDEELVIKGSILQKYPRIRFHTDLVDAHLYCLKKYVVDFLMENGSITSIRSELIPYLVRKQFSSASSQQGQEEKEEDLKKKELKSLDIYSFLKEANTLNLAPYDACWNACRGDRWEDLPRSQVRCYVHIMKEGLCSRVSTLGLYMEANRQVPKLLSALCPEEPLVHSSAQIVSKHLVGVDSLIGPETQIGEKSSIKRSVIGSSCLIKDRVTITNCLLMNSVTVEEGSNIQGSVICNNAVIEKGADIKDCLIGSGQRIEAKAKRVNEVIVGSDQLMEI</sequence>
<proteinExistence type="evidence at transcript level"/>